<gene>
    <name type="ordered locus">ECU07_1660</name>
</gene>
<sequence>MTAVAQKIIENLKMQDEVRSSDIDAPYSEIHGALISLESRGICNVKMEESYEEVLTPEGEEVERSGSQEYLLLESIGEDGMSIEELERHSLGKMNAFRNKWIRREGNRVFRNVESIEDTVRNMVISMKRGTASAEEVEALRKRKLVSRRKKIVFIATKGPMFFDNTSYVTELTSEMVLDGSYRDLSFKHYNFNAEGNAPQCGSIHPLMKIREDFRRIFIELGFSEMATNQYVESSFWNFDALFQPQNHPSRDAHDTFFLLNPELSTDFPSDYLKEVGETHRGGKYNSLGYMSNWDIKEAQKNILRTHTTSVSARNLYRLAKKEFKPAKLFSIDKVFRNETVDATHLAEFHQVEGLVVGKGLNLTHLMGILREFFNRLGMGDIRFKPAFNPYTEPSMEVFGYHKGMDRWIEVGNSGVFRPEMLRPMGFDSDVSVVAWGLSLERPAMIKYGLKNIRELVGHKVDIEFSRKSEICFFD</sequence>
<dbReference type="EC" id="6.1.1.20"/>
<dbReference type="EMBL" id="AL590447">
    <property type="protein sequence ID" value="CAD25697.1"/>
    <property type="molecule type" value="Genomic_DNA"/>
</dbReference>
<dbReference type="RefSeq" id="NP_586093.1">
    <property type="nucleotide sequence ID" value="NM_001041715.1"/>
</dbReference>
<dbReference type="SMR" id="Q8SRG9"/>
<dbReference type="FunCoup" id="Q8SRG9">
    <property type="interactions" value="304"/>
</dbReference>
<dbReference type="STRING" id="284813.Q8SRG9"/>
<dbReference type="GeneID" id="859527"/>
<dbReference type="KEGG" id="ecu:ECU07_1660"/>
<dbReference type="VEuPathDB" id="MicrosporidiaDB:ECU07_1660"/>
<dbReference type="HOGENOM" id="CLU_025086_2_2_1"/>
<dbReference type="InParanoid" id="Q8SRG9"/>
<dbReference type="OMA" id="QIEGWVM"/>
<dbReference type="OrthoDB" id="238316at2759"/>
<dbReference type="Proteomes" id="UP000000819">
    <property type="component" value="Chromosome VII"/>
</dbReference>
<dbReference type="GO" id="GO:0005829">
    <property type="term" value="C:cytosol"/>
    <property type="evidence" value="ECO:0007669"/>
    <property type="project" value="TreeGrafter"/>
</dbReference>
<dbReference type="GO" id="GO:0009328">
    <property type="term" value="C:phenylalanine-tRNA ligase complex"/>
    <property type="evidence" value="ECO:0007669"/>
    <property type="project" value="TreeGrafter"/>
</dbReference>
<dbReference type="GO" id="GO:0005524">
    <property type="term" value="F:ATP binding"/>
    <property type="evidence" value="ECO:0007669"/>
    <property type="project" value="UniProtKB-KW"/>
</dbReference>
<dbReference type="GO" id="GO:0000287">
    <property type="term" value="F:magnesium ion binding"/>
    <property type="evidence" value="ECO:0000250"/>
    <property type="project" value="UniProtKB"/>
</dbReference>
<dbReference type="GO" id="GO:0004826">
    <property type="term" value="F:phenylalanine-tRNA ligase activity"/>
    <property type="evidence" value="ECO:0007669"/>
    <property type="project" value="UniProtKB-EC"/>
</dbReference>
<dbReference type="GO" id="GO:0000049">
    <property type="term" value="F:tRNA binding"/>
    <property type="evidence" value="ECO:0007669"/>
    <property type="project" value="InterPro"/>
</dbReference>
<dbReference type="GO" id="GO:0006432">
    <property type="term" value="P:phenylalanyl-tRNA aminoacylation"/>
    <property type="evidence" value="ECO:0007669"/>
    <property type="project" value="InterPro"/>
</dbReference>
<dbReference type="CDD" id="cd00496">
    <property type="entry name" value="PheRS_alpha_core"/>
    <property type="match status" value="1"/>
</dbReference>
<dbReference type="FunFam" id="3.30.930.10:FF:000178">
    <property type="entry name" value="Phenylalanyl-tRNA synthetase subunit alpha"/>
    <property type="match status" value="1"/>
</dbReference>
<dbReference type="Gene3D" id="1.10.10.2320">
    <property type="match status" value="1"/>
</dbReference>
<dbReference type="Gene3D" id="1.10.10.2330">
    <property type="match status" value="1"/>
</dbReference>
<dbReference type="Gene3D" id="3.30.1370.240">
    <property type="match status" value="1"/>
</dbReference>
<dbReference type="Gene3D" id="3.30.930.10">
    <property type="entry name" value="Bira Bifunctional Protein, Domain 2"/>
    <property type="match status" value="1"/>
</dbReference>
<dbReference type="InterPro" id="IPR006195">
    <property type="entry name" value="aa-tRNA-synth_II"/>
</dbReference>
<dbReference type="InterPro" id="IPR045864">
    <property type="entry name" value="aa-tRNA-synth_II/BPL/LPL"/>
</dbReference>
<dbReference type="InterPro" id="IPR004529">
    <property type="entry name" value="Phe-tRNA-synth_IIc_asu"/>
</dbReference>
<dbReference type="InterPro" id="IPR002319">
    <property type="entry name" value="Phenylalanyl-tRNA_Synthase"/>
</dbReference>
<dbReference type="InterPro" id="IPR040725">
    <property type="entry name" value="PheRS_DBD3"/>
</dbReference>
<dbReference type="NCBIfam" id="TIGR00468">
    <property type="entry name" value="pheS"/>
    <property type="match status" value="1"/>
</dbReference>
<dbReference type="NCBIfam" id="NF003210">
    <property type="entry name" value="PRK04172.1"/>
    <property type="match status" value="1"/>
</dbReference>
<dbReference type="PANTHER" id="PTHR11538:SF40">
    <property type="entry name" value="PHENYLALANINE--TRNA LIGASE ALPHA SUBUNIT"/>
    <property type="match status" value="1"/>
</dbReference>
<dbReference type="PANTHER" id="PTHR11538">
    <property type="entry name" value="PHENYLALANYL-TRNA SYNTHETASE"/>
    <property type="match status" value="1"/>
</dbReference>
<dbReference type="Pfam" id="PF18553">
    <property type="entry name" value="PheRS_DBD3"/>
    <property type="match status" value="1"/>
</dbReference>
<dbReference type="Pfam" id="PF01409">
    <property type="entry name" value="tRNA-synt_2d"/>
    <property type="match status" value="1"/>
</dbReference>
<dbReference type="SUPFAM" id="SSF55681">
    <property type="entry name" value="Class II aaRS and biotin synthetases"/>
    <property type="match status" value="1"/>
</dbReference>
<dbReference type="PROSITE" id="PS50862">
    <property type="entry name" value="AA_TRNA_LIGASE_II"/>
    <property type="match status" value="1"/>
</dbReference>
<keyword id="KW-0030">Aminoacyl-tRNA synthetase</keyword>
<keyword id="KW-0067">ATP-binding</keyword>
<keyword id="KW-0963">Cytoplasm</keyword>
<keyword id="KW-0436">Ligase</keyword>
<keyword id="KW-0460">Magnesium</keyword>
<keyword id="KW-0479">Metal-binding</keyword>
<keyword id="KW-0547">Nucleotide-binding</keyword>
<keyword id="KW-0648">Protein biosynthesis</keyword>
<keyword id="KW-1185">Reference proteome</keyword>
<reference key="1">
    <citation type="journal article" date="2001" name="Nature">
        <title>Genome sequence and gene compaction of the eukaryote parasite Encephalitozoon cuniculi.</title>
        <authorList>
            <person name="Katinka M.D."/>
            <person name="Duprat S."/>
            <person name="Cornillot E."/>
            <person name="Metenier G."/>
            <person name="Thomarat F."/>
            <person name="Prensier G."/>
            <person name="Barbe V."/>
            <person name="Peyretaillade E."/>
            <person name="Brottier P."/>
            <person name="Wincker P."/>
            <person name="Delbac F."/>
            <person name="El Alaoui H."/>
            <person name="Peyret P."/>
            <person name="Saurin W."/>
            <person name="Gouy M."/>
            <person name="Weissenbach J."/>
            <person name="Vivares C.P."/>
        </authorList>
    </citation>
    <scope>NUCLEOTIDE SEQUENCE [LARGE SCALE GENOMIC DNA]</scope>
    <source>
        <strain>GB-M1</strain>
    </source>
</reference>
<comment type="catalytic activity">
    <reaction>
        <text>tRNA(Phe) + L-phenylalanine + ATP = L-phenylalanyl-tRNA(Phe) + AMP + diphosphate + H(+)</text>
        <dbReference type="Rhea" id="RHEA:19413"/>
        <dbReference type="Rhea" id="RHEA-COMP:9668"/>
        <dbReference type="Rhea" id="RHEA-COMP:9699"/>
        <dbReference type="ChEBI" id="CHEBI:15378"/>
        <dbReference type="ChEBI" id="CHEBI:30616"/>
        <dbReference type="ChEBI" id="CHEBI:33019"/>
        <dbReference type="ChEBI" id="CHEBI:58095"/>
        <dbReference type="ChEBI" id="CHEBI:78442"/>
        <dbReference type="ChEBI" id="CHEBI:78531"/>
        <dbReference type="ChEBI" id="CHEBI:456215"/>
        <dbReference type="EC" id="6.1.1.20"/>
    </reaction>
</comment>
<comment type="cofactor">
    <cofactor evidence="2">
        <name>Mg(2+)</name>
        <dbReference type="ChEBI" id="CHEBI:18420"/>
    </cofactor>
</comment>
<comment type="subunit">
    <text evidence="1">Tetramer of two alpha and two beta subunits.</text>
</comment>
<comment type="subcellular location">
    <subcellularLocation>
        <location evidence="1">Cytoplasm</location>
    </subcellularLocation>
</comment>
<comment type="similarity">
    <text evidence="4">Belongs to the class-II aminoacyl-tRNA synthetase family. Phe-tRNA synthetase alpha subunit type 2 subfamily.</text>
</comment>
<protein>
    <recommendedName>
        <fullName>Probable phenylalanine--tRNA ligase alpha subunit</fullName>
        <ecNumber>6.1.1.20</ecNumber>
    </recommendedName>
    <alternativeName>
        <fullName>Phenylalanyl-tRNA synthetase alpha subunit</fullName>
        <shortName>PheRS</shortName>
    </alternativeName>
</protein>
<accession>Q8SRG9</accession>
<evidence type="ECO:0000250" key="1"/>
<evidence type="ECO:0000250" key="2">
    <source>
        <dbReference type="UniProtKB" id="A5K9S0"/>
    </source>
</evidence>
<evidence type="ECO:0000250" key="3">
    <source>
        <dbReference type="UniProtKB" id="Q9Y285"/>
    </source>
</evidence>
<evidence type="ECO:0000305" key="4"/>
<name>SYFA_ENCCU</name>
<feature type="chain" id="PRO_0000388407" description="Probable phenylalanine--tRNA ligase alpha subunit">
    <location>
        <begin position="1"/>
        <end position="475"/>
    </location>
</feature>
<feature type="region of interest" description="Contains the major tRNA-Phe binding sites" evidence="1">
    <location>
        <begin position="2"/>
        <end position="151"/>
    </location>
</feature>
<feature type="binding site" evidence="3">
    <location>
        <position position="309"/>
    </location>
    <ligand>
        <name>L-phenylalanine</name>
        <dbReference type="ChEBI" id="CHEBI:58095"/>
    </ligand>
</feature>
<feature type="binding site" evidence="3">
    <location>
        <begin position="351"/>
        <end position="353"/>
    </location>
    <ligand>
        <name>L-phenylalanine</name>
        <dbReference type="ChEBI" id="CHEBI:58095"/>
    </ligand>
</feature>
<feature type="binding site" evidence="3">
    <location>
        <position position="391"/>
    </location>
    <ligand>
        <name>L-phenylalanine</name>
        <dbReference type="ChEBI" id="CHEBI:58095"/>
    </ligand>
</feature>
<feature type="binding site" evidence="2">
    <location>
        <position position="393"/>
    </location>
    <ligand>
        <name>Mg(2+)</name>
        <dbReference type="ChEBI" id="CHEBI:18420"/>
        <note>shared with beta subunit</note>
    </ligand>
</feature>
<feature type="binding site" evidence="3">
    <location>
        <position position="417"/>
    </location>
    <ligand>
        <name>L-phenylalanine</name>
        <dbReference type="ChEBI" id="CHEBI:58095"/>
    </ligand>
</feature>
<organism>
    <name type="scientific">Encephalitozoon cuniculi (strain GB-M1)</name>
    <name type="common">Microsporidian parasite</name>
    <dbReference type="NCBI Taxonomy" id="284813"/>
    <lineage>
        <taxon>Eukaryota</taxon>
        <taxon>Fungi</taxon>
        <taxon>Fungi incertae sedis</taxon>
        <taxon>Microsporidia</taxon>
        <taxon>Unikaryonidae</taxon>
        <taxon>Encephalitozoon</taxon>
    </lineage>
</organism>
<proteinExistence type="inferred from homology"/>